<comment type="function">
    <text evidence="1">Involved in the biosynthesis of the osmoprotectant glycine betaine. Catalyzes the irreversible oxidation of betaine aldehyde to the corresponding acid.</text>
</comment>
<comment type="catalytic activity">
    <reaction evidence="1">
        <text>betaine aldehyde + NAD(+) + H2O = glycine betaine + NADH + 2 H(+)</text>
        <dbReference type="Rhea" id="RHEA:15305"/>
        <dbReference type="ChEBI" id="CHEBI:15377"/>
        <dbReference type="ChEBI" id="CHEBI:15378"/>
        <dbReference type="ChEBI" id="CHEBI:15710"/>
        <dbReference type="ChEBI" id="CHEBI:17750"/>
        <dbReference type="ChEBI" id="CHEBI:57540"/>
        <dbReference type="ChEBI" id="CHEBI:57945"/>
        <dbReference type="EC" id="1.2.1.8"/>
    </reaction>
    <physiologicalReaction direction="left-to-right" evidence="1">
        <dbReference type="Rhea" id="RHEA:15306"/>
    </physiologicalReaction>
</comment>
<comment type="cofactor">
    <cofactor evidence="1">
        <name>K(+)</name>
        <dbReference type="ChEBI" id="CHEBI:29103"/>
    </cofactor>
    <text evidence="1">Binds 2 potassium ions per subunit.</text>
</comment>
<comment type="pathway">
    <text evidence="1">Amine and polyamine biosynthesis; betaine biosynthesis via choline pathway; betaine from betaine aldehyde: step 1/1.</text>
</comment>
<comment type="subunit">
    <text evidence="1">Dimer of dimers.</text>
</comment>
<comment type="similarity">
    <text evidence="1">Belongs to the aldehyde dehydrogenase family.</text>
</comment>
<protein>
    <recommendedName>
        <fullName evidence="1">Betaine aldehyde dehydrogenase</fullName>
        <shortName evidence="1">BADH</shortName>
        <ecNumber evidence="1">1.2.1.8</ecNumber>
    </recommendedName>
</protein>
<name>BETB_CERS1</name>
<organism>
    <name type="scientific">Cereibacter sphaeroides (strain ATCC 17029 / ATH 2.4.9)</name>
    <name type="common">Rhodobacter sphaeroides</name>
    <dbReference type="NCBI Taxonomy" id="349101"/>
    <lineage>
        <taxon>Bacteria</taxon>
        <taxon>Pseudomonadati</taxon>
        <taxon>Pseudomonadota</taxon>
        <taxon>Alphaproteobacteria</taxon>
        <taxon>Rhodobacterales</taxon>
        <taxon>Paracoccaceae</taxon>
        <taxon>Cereibacter</taxon>
    </lineage>
</organism>
<dbReference type="EC" id="1.2.1.8" evidence="1"/>
<dbReference type="EMBL" id="CP000577">
    <property type="protein sequence ID" value="ABN75966.1"/>
    <property type="molecule type" value="Genomic_DNA"/>
</dbReference>
<dbReference type="RefSeq" id="WP_009562902.1">
    <property type="nucleotide sequence ID" value="NC_009049.1"/>
</dbReference>
<dbReference type="SMR" id="A3PI00"/>
<dbReference type="KEGG" id="rsh:Rsph17029_0855"/>
<dbReference type="HOGENOM" id="CLU_005391_0_1_5"/>
<dbReference type="UniPathway" id="UPA00529">
    <property type="reaction ID" value="UER00386"/>
</dbReference>
<dbReference type="GO" id="GO:0008802">
    <property type="term" value="F:betaine-aldehyde dehydrogenase (NAD+) activity"/>
    <property type="evidence" value="ECO:0007669"/>
    <property type="project" value="UniProtKB-UniRule"/>
</dbReference>
<dbReference type="GO" id="GO:0046872">
    <property type="term" value="F:metal ion binding"/>
    <property type="evidence" value="ECO:0007669"/>
    <property type="project" value="UniProtKB-KW"/>
</dbReference>
<dbReference type="GO" id="GO:0019285">
    <property type="term" value="P:glycine betaine biosynthetic process from choline"/>
    <property type="evidence" value="ECO:0007669"/>
    <property type="project" value="UniProtKB-UniRule"/>
</dbReference>
<dbReference type="FunFam" id="3.40.309.10:FF:000012">
    <property type="entry name" value="Betaine aldehyde dehydrogenase"/>
    <property type="match status" value="1"/>
</dbReference>
<dbReference type="FunFam" id="3.40.605.10:FF:000007">
    <property type="entry name" value="NAD/NADP-dependent betaine aldehyde dehydrogenase"/>
    <property type="match status" value="1"/>
</dbReference>
<dbReference type="Gene3D" id="3.40.605.10">
    <property type="entry name" value="Aldehyde Dehydrogenase, Chain A, domain 1"/>
    <property type="match status" value="1"/>
</dbReference>
<dbReference type="Gene3D" id="3.40.309.10">
    <property type="entry name" value="Aldehyde Dehydrogenase, Chain A, domain 2"/>
    <property type="match status" value="1"/>
</dbReference>
<dbReference type="HAMAP" id="MF_00804">
    <property type="entry name" value="BADH"/>
    <property type="match status" value="1"/>
</dbReference>
<dbReference type="InterPro" id="IPR016161">
    <property type="entry name" value="Ald_DH/histidinol_DH"/>
</dbReference>
<dbReference type="InterPro" id="IPR016163">
    <property type="entry name" value="Ald_DH_C"/>
</dbReference>
<dbReference type="InterPro" id="IPR016160">
    <property type="entry name" value="Ald_DH_CS_CYS"/>
</dbReference>
<dbReference type="InterPro" id="IPR029510">
    <property type="entry name" value="Ald_DH_CS_GLU"/>
</dbReference>
<dbReference type="InterPro" id="IPR016162">
    <property type="entry name" value="Ald_DH_N"/>
</dbReference>
<dbReference type="InterPro" id="IPR015590">
    <property type="entry name" value="Aldehyde_DH_dom"/>
</dbReference>
<dbReference type="InterPro" id="IPR011264">
    <property type="entry name" value="BADH"/>
</dbReference>
<dbReference type="NCBIfam" id="TIGR01804">
    <property type="entry name" value="BADH"/>
    <property type="match status" value="1"/>
</dbReference>
<dbReference type="NCBIfam" id="NF009725">
    <property type="entry name" value="PRK13252.1"/>
    <property type="match status" value="1"/>
</dbReference>
<dbReference type="PANTHER" id="PTHR11699">
    <property type="entry name" value="ALDEHYDE DEHYDROGENASE-RELATED"/>
    <property type="match status" value="1"/>
</dbReference>
<dbReference type="Pfam" id="PF00171">
    <property type="entry name" value="Aldedh"/>
    <property type="match status" value="1"/>
</dbReference>
<dbReference type="SUPFAM" id="SSF53720">
    <property type="entry name" value="ALDH-like"/>
    <property type="match status" value="1"/>
</dbReference>
<dbReference type="PROSITE" id="PS00070">
    <property type="entry name" value="ALDEHYDE_DEHYDR_CYS"/>
    <property type="match status" value="1"/>
</dbReference>
<dbReference type="PROSITE" id="PS00687">
    <property type="entry name" value="ALDEHYDE_DEHYDR_GLU"/>
    <property type="match status" value="1"/>
</dbReference>
<keyword id="KW-0479">Metal-binding</keyword>
<keyword id="KW-0520">NAD</keyword>
<keyword id="KW-0521">NADP</keyword>
<keyword id="KW-0558">Oxidation</keyword>
<keyword id="KW-0560">Oxidoreductase</keyword>
<keyword id="KW-0630">Potassium</keyword>
<evidence type="ECO:0000255" key="1">
    <source>
        <dbReference type="HAMAP-Rule" id="MF_00804"/>
    </source>
</evidence>
<accession>A3PI00</accession>
<proteinExistence type="inferred from homology"/>
<gene>
    <name evidence="1" type="primary">betB</name>
    <name type="ordered locus">Rsph17029_0855</name>
</gene>
<sequence>MRAQPAASHFVDGRPLEDETGAPIPVIYPATGEEIARLHEATPAVIEAALASGARAQAAWAAMRPVERARILRRASDLIRARNEELSLLETLDTGKPLQETLVADWASGADALEFFAGLAPAVTGETVPLGQDFVYTIREPLGLCVGIGAWNYPSQIACWKAAPALALGNAMVFKPSEVTPLGALKLAEILIEAGLPPGLFNVVQGRGAVGAALVTDSRVAKVSLTGSVPTGRRVYAAAAEGVRHVTMELGGKSPLIVFDDADLESAIGAAMLGNFYSAGQICSNGTRVFVQKGIKEAFLARLAERADAIRMGDPLDPEVQMGPLVSQAQLEKVLAYIEKARAEGGRLVCGGEASVSPGCYVQPTVFADVTDAMTLAREEVFGPVMAVLDFETEEEAIARANATDFGLAAGVFTADLTRAHRVVAQLQAGTCWINAYNLTPVEAPFGGVKLSGVGRENGRAAVEHYTQVKSVYVGMGPVDAPY</sequence>
<feature type="chain" id="PRO_1000047054" description="Betaine aldehyde dehydrogenase">
    <location>
        <begin position="1"/>
        <end position="483"/>
    </location>
</feature>
<feature type="active site" description="Charge relay system" evidence="1">
    <location>
        <position position="161"/>
    </location>
</feature>
<feature type="active site" description="Proton acceptor" evidence="1">
    <location>
        <position position="249"/>
    </location>
</feature>
<feature type="active site" description="Nucleophile" evidence="1">
    <location>
        <position position="283"/>
    </location>
</feature>
<feature type="active site" description="Charge relay system" evidence="1">
    <location>
        <position position="457"/>
    </location>
</feature>
<feature type="binding site" evidence="1">
    <location>
        <position position="27"/>
    </location>
    <ligand>
        <name>K(+)</name>
        <dbReference type="ChEBI" id="CHEBI:29103"/>
        <label>1</label>
    </ligand>
</feature>
<feature type="binding site" evidence="1">
    <location>
        <position position="93"/>
    </location>
    <ligand>
        <name>K(+)</name>
        <dbReference type="ChEBI" id="CHEBI:29103"/>
        <label>1</label>
    </ligand>
</feature>
<feature type="binding site" evidence="1">
    <location>
        <begin position="149"/>
        <end position="151"/>
    </location>
    <ligand>
        <name>NAD(+)</name>
        <dbReference type="ChEBI" id="CHEBI:57540"/>
    </ligand>
</feature>
<feature type="binding site" evidence="1">
    <location>
        <begin position="175"/>
        <end position="178"/>
    </location>
    <ligand>
        <name>NAD(+)</name>
        <dbReference type="ChEBI" id="CHEBI:57540"/>
    </ligand>
</feature>
<feature type="binding site" evidence="1">
    <location>
        <position position="179"/>
    </location>
    <ligand>
        <name>K(+)</name>
        <dbReference type="ChEBI" id="CHEBI:29103"/>
        <label>1</label>
    </ligand>
</feature>
<feature type="binding site" evidence="1">
    <location>
        <begin position="228"/>
        <end position="231"/>
    </location>
    <ligand>
        <name>NAD(+)</name>
        <dbReference type="ChEBI" id="CHEBI:57540"/>
    </ligand>
</feature>
<feature type="binding site" evidence="1">
    <location>
        <position position="243"/>
    </location>
    <ligand>
        <name>K(+)</name>
        <dbReference type="ChEBI" id="CHEBI:29103"/>
        <label>2</label>
    </ligand>
</feature>
<feature type="binding site" evidence="1">
    <location>
        <position position="251"/>
    </location>
    <ligand>
        <name>NAD(+)</name>
        <dbReference type="ChEBI" id="CHEBI:57540"/>
    </ligand>
</feature>
<feature type="binding site" description="covalent" evidence="1">
    <location>
        <position position="283"/>
    </location>
    <ligand>
        <name>NAD(+)</name>
        <dbReference type="ChEBI" id="CHEBI:57540"/>
    </ligand>
</feature>
<feature type="binding site" evidence="1">
    <location>
        <position position="380"/>
    </location>
    <ligand>
        <name>NAD(+)</name>
        <dbReference type="ChEBI" id="CHEBI:57540"/>
    </ligand>
</feature>
<feature type="binding site" evidence="1">
    <location>
        <position position="450"/>
    </location>
    <ligand>
        <name>K(+)</name>
        <dbReference type="ChEBI" id="CHEBI:29103"/>
        <label>2</label>
    </ligand>
</feature>
<feature type="binding site" evidence="1">
    <location>
        <position position="453"/>
    </location>
    <ligand>
        <name>K(+)</name>
        <dbReference type="ChEBI" id="CHEBI:29103"/>
        <label>2</label>
    </ligand>
</feature>
<feature type="modified residue" description="Cysteine sulfenic acid (-SOH)" evidence="1">
    <location>
        <position position="283"/>
    </location>
</feature>
<reference key="1">
    <citation type="submission" date="2007-02" db="EMBL/GenBank/DDBJ databases">
        <title>Complete sequence of chromosome 1 of Rhodobacter sphaeroides ATCC 17029.</title>
        <authorList>
            <person name="Copeland A."/>
            <person name="Lucas S."/>
            <person name="Lapidus A."/>
            <person name="Barry K."/>
            <person name="Detter J.C."/>
            <person name="Glavina del Rio T."/>
            <person name="Hammon N."/>
            <person name="Israni S."/>
            <person name="Dalin E."/>
            <person name="Tice H."/>
            <person name="Pitluck S."/>
            <person name="Kiss H."/>
            <person name="Brettin T."/>
            <person name="Bruce D."/>
            <person name="Han C."/>
            <person name="Tapia R."/>
            <person name="Gilna P."/>
            <person name="Schmutz J."/>
            <person name="Larimer F."/>
            <person name="Land M."/>
            <person name="Hauser L."/>
            <person name="Kyrpides N."/>
            <person name="Mikhailova N."/>
            <person name="Richardson P."/>
            <person name="Mackenzie C."/>
            <person name="Choudhary M."/>
            <person name="Donohue T.J."/>
            <person name="Kaplan S."/>
        </authorList>
    </citation>
    <scope>NUCLEOTIDE SEQUENCE [LARGE SCALE GENOMIC DNA]</scope>
    <source>
        <strain>ATCC 17029 / ATH 2.4.9</strain>
    </source>
</reference>